<comment type="function">
    <text evidence="3 4 6 7 8">Catalyzes the removal of elemental sulfur and selenium atoms from L-cysteine, L-cystine, L-selenocysteine, and L-selenocystine to produce L-alanine, and transiently retains the released sulfur atom on a cysteine residue, in the form of a persulfide. Can also desulfinate L-cysteine sulfinate (3-sulfino-L-alanine), which is the best substrate of the enzyme. Functions as a selenium delivery protein in the pathway for the biosynthesis of selenophosphate. Seems to participate in Fe/S biogenesis by recruiting the SufBCD-SufE proteins. Transfers sulfur to CsdE that increases the cysteine desulfurase activity of CsdA. Can also transfer sulfur directly to TcdA/CsdL in vitro. Appears to support the function of TcdA in the generation of cyclic threonylcarbamoyladenosine at position 37 (ct(6)A37) in tRNAs that read codons beginning with adenine.</text>
</comment>
<comment type="catalytic activity">
    <reaction evidence="4 8">
        <text>(sulfur carrier)-H + L-cysteine = (sulfur carrier)-SH + L-alanine</text>
        <dbReference type="Rhea" id="RHEA:43892"/>
        <dbReference type="Rhea" id="RHEA-COMP:14737"/>
        <dbReference type="Rhea" id="RHEA-COMP:14739"/>
        <dbReference type="ChEBI" id="CHEBI:29917"/>
        <dbReference type="ChEBI" id="CHEBI:35235"/>
        <dbReference type="ChEBI" id="CHEBI:57972"/>
        <dbReference type="ChEBI" id="CHEBI:64428"/>
        <dbReference type="EC" id="2.8.1.7"/>
    </reaction>
</comment>
<comment type="catalytic activity">
    <reaction evidence="4 8">
        <text>L-selenocysteine + AH2 = hydrogenselenide + L-alanine + A + H(+)</text>
        <dbReference type="Rhea" id="RHEA:11632"/>
        <dbReference type="ChEBI" id="CHEBI:13193"/>
        <dbReference type="ChEBI" id="CHEBI:15378"/>
        <dbReference type="ChEBI" id="CHEBI:17499"/>
        <dbReference type="ChEBI" id="CHEBI:29317"/>
        <dbReference type="ChEBI" id="CHEBI:57843"/>
        <dbReference type="ChEBI" id="CHEBI:57972"/>
        <dbReference type="EC" id="4.4.1.16"/>
    </reaction>
</comment>
<comment type="catalytic activity">
    <reaction evidence="8">
        <text>3-sulfino-L-alanine + H2O = sulfite + L-alanine + H(+)</text>
        <dbReference type="Rhea" id="RHEA:28278"/>
        <dbReference type="ChEBI" id="CHEBI:15377"/>
        <dbReference type="ChEBI" id="CHEBI:15378"/>
        <dbReference type="ChEBI" id="CHEBI:17359"/>
        <dbReference type="ChEBI" id="CHEBI:57972"/>
        <dbReference type="ChEBI" id="CHEBI:61085"/>
    </reaction>
</comment>
<comment type="cofactor">
    <cofactor evidence="4 8">
        <name>pyridoxal 5'-phosphate</name>
        <dbReference type="ChEBI" id="CHEBI:597326"/>
    </cofactor>
</comment>
<comment type="activity regulation">
    <text evidence="4">Cysteine desulfurase activity is increased 2-fold in the presence of CsdE.</text>
</comment>
<comment type="biophysicochemical properties">
    <kinetics>
        <KM evidence="8">0.24 mM for L-cysteine sulfinate</KM>
        <KM evidence="8">1 mM for L-selenocysteine</KM>
        <KM evidence="8">35 mM for L-cysteine</KM>
        <KM evidence="8">3.3 mM for L-cystine</KM>
        <Vmax evidence="8">20.0 umol/min/mg enzyme with L-cysteine sulfinate as substrate</Vmax>
        <Vmax evidence="8">7.4 umol/min/mg enzyme with L-selenocysteine as substrate</Vmax>
        <Vmax evidence="8">3.4 umol/min/mg enzyme with L-cysteine as substrate</Vmax>
        <Vmax evidence="8">0.017 umol/min/mg enzyme with L-cystine as substrate</Vmax>
    </kinetics>
    <phDependence>
        <text evidence="8">Optimum pH is around 7.0 and 7.5 for the removal of selenium and sulfur atoms from L-selenocysteine and L-cysteine, respectively.</text>
    </phDependence>
</comment>
<comment type="subunit">
    <text evidence="4">Homodimer. Forms a heterodimer with CsdE.</text>
</comment>
<comment type="interaction">
    <interactant intactId="EBI-545660">
        <id>Q46925</id>
    </interactant>
    <interactant intactId="EBI-1130454">
        <id>P0AGF2</id>
        <label>csdE</label>
    </interactant>
    <organismsDiffer>false</organismsDiffer>
    <experiments>8</experiments>
</comment>
<comment type="interaction">
    <interactant intactId="EBI-545660">
        <id>Q46925</id>
    </interactant>
    <interactant intactId="EBI-545666">
        <id>P15877</id>
        <label>gcd</label>
    </interactant>
    <organismsDiffer>false</organismsDiffer>
    <experiments>2</experiments>
</comment>
<comment type="interaction">
    <interactant intactId="EBI-545660">
        <id>Q46925</id>
    </interactant>
    <interactant intactId="EBI-1130463">
        <id>Q46927</id>
        <label>tcdA</label>
    </interactant>
    <organismsDiffer>false</organismsDiffer>
    <experiments>2</experiments>
</comment>
<comment type="induction">
    <text evidence="5">Induced in persister cells.</text>
</comment>
<comment type="disruption phenotype">
    <text evidence="6 7">Cells lacking this gene display a high decrease in the level of ct(6)A modification in tRNAs, and show the t(6)A modification instead. They also exhibit a fitness defect, are unable to swim, and are more resistant to the norfloxacin antibiotic than the wild-type.</text>
</comment>
<comment type="similarity">
    <text evidence="10">Belongs to the class-V pyridoxal-phosphate-dependent aminotransferase family. Csd subfamily.</text>
</comment>
<keyword id="KW-0002">3D-structure</keyword>
<keyword id="KW-0903">Direct protein sequencing</keyword>
<keyword id="KW-0378">Hydrolase</keyword>
<keyword id="KW-0456">Lyase</keyword>
<keyword id="KW-0663">Pyridoxal phosphate</keyword>
<keyword id="KW-1185">Reference proteome</keyword>
<keyword id="KW-0808">Transferase</keyword>
<accession>Q46925</accession>
<accession>Q2MA24</accession>
<proteinExistence type="evidence at protein level"/>
<reference key="1">
    <citation type="journal article" date="1997" name="J. Biol. Chem.">
        <title>Cysteine sulfinate desulfinase, a NIFS-like protein of Escherichia coli with selenocysteine lyase and cysteine desulfurase activities. Gene cloning, purification, and characterization of a novel pyridoxal enzyme.</title>
        <authorList>
            <person name="Mihara H."/>
            <person name="Kurihara T."/>
            <person name="Yoshimura T."/>
            <person name="Soda K."/>
            <person name="Esaki N."/>
        </authorList>
    </citation>
    <scope>NUCLEOTIDE SEQUENCE [GENOMIC DNA]</scope>
    <scope>PROTEIN SEQUENCE OF 1-20</scope>
    <scope>FUNCTION</scope>
    <scope>CATALYTIC ACTIVITY</scope>
    <scope>COFACTOR</scope>
    <scope>BIOPHYSICOCHEMICAL PROPERTIES</scope>
    <scope>SUBSTRATE SPECIFICITY</scope>
    <scope>MUTAGENESIS OF CYS-100; CYS-176 AND CYS-323</scope>
    <source>
        <strain>K12 / JM109 / ATCC 53323</strain>
    </source>
</reference>
<reference key="2">
    <citation type="patent" date="1999-02-04" number="WO9905285">
        <title>Method for producing biotin.</title>
        <authorList>
            <person name="Schroeder H."/>
            <person name="Hauer B."/>
        </authorList>
    </citation>
    <scope>NUCLEOTIDE SEQUENCE [GENOMIC DNA]</scope>
    <source>
        <strain>K12 / W3110 / ATCC 27325 / DSM 5911</strain>
    </source>
</reference>
<reference key="3">
    <citation type="journal article" date="1997" name="Science">
        <title>The complete genome sequence of Escherichia coli K-12.</title>
        <authorList>
            <person name="Blattner F.R."/>
            <person name="Plunkett G. III"/>
            <person name="Bloch C.A."/>
            <person name="Perna N.T."/>
            <person name="Burland V."/>
            <person name="Riley M."/>
            <person name="Collado-Vides J."/>
            <person name="Glasner J.D."/>
            <person name="Rode C.K."/>
            <person name="Mayhew G.F."/>
            <person name="Gregor J."/>
            <person name="Davis N.W."/>
            <person name="Kirkpatrick H.A."/>
            <person name="Goeden M.A."/>
            <person name="Rose D.J."/>
            <person name="Mau B."/>
            <person name="Shao Y."/>
        </authorList>
    </citation>
    <scope>NUCLEOTIDE SEQUENCE [LARGE SCALE GENOMIC DNA]</scope>
    <source>
        <strain>K12 / MG1655 / ATCC 47076</strain>
    </source>
</reference>
<reference key="4">
    <citation type="journal article" date="2006" name="Mol. Syst. Biol.">
        <title>Highly accurate genome sequences of Escherichia coli K-12 strains MG1655 and W3110.</title>
        <authorList>
            <person name="Hayashi K."/>
            <person name="Morooka N."/>
            <person name="Yamamoto Y."/>
            <person name="Fujita K."/>
            <person name="Isono K."/>
            <person name="Choi S."/>
            <person name="Ohtsubo E."/>
            <person name="Baba T."/>
            <person name="Wanner B.L."/>
            <person name="Mori H."/>
            <person name="Horiuchi T."/>
        </authorList>
    </citation>
    <scope>NUCLEOTIDE SEQUENCE [LARGE SCALE GENOMIC DNA]</scope>
    <source>
        <strain>K12 / W3110 / ATCC 27325 / DSM 5911</strain>
    </source>
</reference>
<reference key="5">
    <citation type="journal article" date="2000" name="J. Biol. Chem.">
        <title>Escherichia coli NifS-like proteins provide selenium in the pathway for the biosynthesis of selenophosphate.</title>
        <authorList>
            <person name="Lacourciere G.M."/>
            <person name="Mihara H."/>
            <person name="Kurihara T."/>
            <person name="Esaki N."/>
            <person name="Stadtman T.C."/>
        </authorList>
    </citation>
    <scope>FUNCTION</scope>
</reference>
<reference key="6">
    <citation type="journal article" date="2000" name="J. Biochem.">
        <title>Kinetic and mutational studies of three NifS homologs from Escherichia coli: mechanistic difference between L-cysteine desulfurase and L-selenocysteine lyase reactions.</title>
        <authorList>
            <person name="Mihara H."/>
            <person name="Kurihara T."/>
            <person name="Yoshimura T."/>
            <person name="Esaki N."/>
        </authorList>
    </citation>
    <scope>MUTAGENESIS OF CYS-358</scope>
    <scope>ACTIVE SITE CYS-358</scope>
</reference>
<reference key="7">
    <citation type="journal article" date="2005" name="J. Biol. Chem.">
        <title>Analysis of the heteromeric CsdA-CsdE cysteine desulfurase, assisting Fe-S cluster biogenesis in Escherichia coli.</title>
        <authorList>
            <person name="Loiseau L."/>
            <person name="Ollagnier-de Choudens S."/>
            <person name="Lascoux D."/>
            <person name="Forest E."/>
            <person name="Fontecave M."/>
            <person name="Barras F."/>
        </authorList>
    </citation>
    <scope>FUNCTION</scope>
    <scope>CATALYTIC ACTIVITY</scope>
    <scope>COFACTOR</scope>
    <scope>ACTIVITY REGULATION</scope>
    <scope>INTERACTION WITH CSDE</scope>
    <scope>SUBUNIT</scope>
    <source>
        <strain>K12 / MG1655 / ATCC 47076</strain>
    </source>
</reference>
<reference key="8">
    <citation type="journal article" date="2006" name="BMC Microbiol.">
        <title>Persisters: a distinct physiological state of E. coli.</title>
        <authorList>
            <person name="Shah D."/>
            <person name="Zhang Z."/>
            <person name="Khodursky A."/>
            <person name="Kaldalu N."/>
            <person name="Kurg K."/>
            <person name="Lewis K."/>
        </authorList>
    </citation>
    <scope>INDUCTION IN PERSISTER CELLS</scope>
    <source>
        <strain>K12</strain>
    </source>
</reference>
<reference key="9">
    <citation type="journal article" date="2009" name="Mol. Microbiol.">
        <title>The CsdA cysteine desulphurase promotes Fe/S biogenesis by recruiting Suf components and participates in a new sulphur transfer pathway by recruiting CsdL (ex-YgdL), a ubiquitin-modifying-like protein.</title>
        <authorList>
            <person name="Trotter V."/>
            <person name="Vinella D."/>
            <person name="Loiseau L."/>
            <person name="Ollagnier de Choudens S."/>
            <person name="Fontecave M."/>
            <person name="Barras F."/>
        </authorList>
    </citation>
    <scope>FUNCTION</scope>
    <scope>INTERACTION WITH CSDE</scope>
    <scope>DISRUPTION PHENOTYPE</scope>
    <source>
        <strain>K12 / MG1655 / ATCC 47076</strain>
    </source>
</reference>
<reference key="10">
    <citation type="journal article" date="2013" name="Nat. Chem. Biol.">
        <title>A cyclic form of N6-threonylcarbamoyladenosine as a widely distributed tRNA hypermodification.</title>
        <authorList>
            <person name="Miyauchi K."/>
            <person name="Kimura S."/>
            <person name="Suzuki T."/>
        </authorList>
    </citation>
    <scope>FUNCTION</scope>
    <scope>ROLE IN CT(6)A37 FORMATION</scope>
    <scope>DISRUPTION PHENOTYPE</scope>
</reference>
<organism>
    <name type="scientific">Escherichia coli (strain K12)</name>
    <dbReference type="NCBI Taxonomy" id="83333"/>
    <lineage>
        <taxon>Bacteria</taxon>
        <taxon>Pseudomonadati</taxon>
        <taxon>Pseudomonadota</taxon>
        <taxon>Gammaproteobacteria</taxon>
        <taxon>Enterobacterales</taxon>
        <taxon>Enterobacteriaceae</taxon>
        <taxon>Escherichia</taxon>
    </lineage>
</organism>
<evidence type="ECO:0000250" key="1"/>
<evidence type="ECO:0000269" key="2">
    <source>
    </source>
</evidence>
<evidence type="ECO:0000269" key="3">
    <source>
    </source>
</evidence>
<evidence type="ECO:0000269" key="4">
    <source>
    </source>
</evidence>
<evidence type="ECO:0000269" key="5">
    <source>
    </source>
</evidence>
<evidence type="ECO:0000269" key="6">
    <source>
    </source>
</evidence>
<evidence type="ECO:0000269" key="7">
    <source>
    </source>
</evidence>
<evidence type="ECO:0000269" key="8">
    <source>
    </source>
</evidence>
<evidence type="ECO:0000303" key="9">
    <source>
    </source>
</evidence>
<evidence type="ECO:0000305" key="10"/>
<evidence type="ECO:0000305" key="11">
    <source>
    </source>
</evidence>
<evidence type="ECO:0007829" key="12">
    <source>
        <dbReference type="PDB" id="4LW2"/>
    </source>
</evidence>
<evidence type="ECO:0007829" key="13">
    <source>
        <dbReference type="PDB" id="4LW4"/>
    </source>
</evidence>
<dbReference type="EC" id="2.8.1.7" evidence="4 8"/>
<dbReference type="EC" id="3.13.1.-" evidence="8"/>
<dbReference type="EC" id="4.4.1.16" evidence="4 8"/>
<dbReference type="EMBL" id="AX000470">
    <property type="protein sequence ID" value="CAB77085.1"/>
    <property type="molecule type" value="Unassigned_DNA"/>
</dbReference>
<dbReference type="EMBL" id="U29581">
    <property type="protein sequence ID" value="AAB40460.1"/>
    <property type="molecule type" value="Genomic_DNA"/>
</dbReference>
<dbReference type="EMBL" id="U00096">
    <property type="protein sequence ID" value="AAC75852.1"/>
    <property type="molecule type" value="Genomic_DNA"/>
</dbReference>
<dbReference type="EMBL" id="AP009048">
    <property type="protein sequence ID" value="BAE76882.1"/>
    <property type="molecule type" value="Genomic_DNA"/>
</dbReference>
<dbReference type="PIR" id="F65063">
    <property type="entry name" value="F65063"/>
</dbReference>
<dbReference type="RefSeq" id="NP_417290.1">
    <property type="nucleotide sequence ID" value="NC_000913.3"/>
</dbReference>
<dbReference type="RefSeq" id="WP_001300698.1">
    <property type="nucleotide sequence ID" value="NZ_SSUV01000026.1"/>
</dbReference>
<dbReference type="PDB" id="4LW2">
    <property type="method" value="X-ray"/>
    <property type="resolution" value="1.80 A"/>
    <property type="chains" value="A/B/C=1-401"/>
</dbReference>
<dbReference type="PDB" id="4LW4">
    <property type="method" value="X-ray"/>
    <property type="resolution" value="2.01 A"/>
    <property type="chains" value="A/B=1-401"/>
</dbReference>
<dbReference type="PDB" id="5FT4">
    <property type="method" value="X-ray"/>
    <property type="resolution" value="2.00 A"/>
    <property type="chains" value="A/B=1-401"/>
</dbReference>
<dbReference type="PDB" id="5FT5">
    <property type="method" value="X-ray"/>
    <property type="resolution" value="2.38 A"/>
    <property type="chains" value="A/B=1-401"/>
</dbReference>
<dbReference type="PDB" id="5FT6">
    <property type="method" value="X-ray"/>
    <property type="resolution" value="2.05 A"/>
    <property type="chains" value="A/B=1-401"/>
</dbReference>
<dbReference type="PDB" id="5FT8">
    <property type="method" value="X-ray"/>
    <property type="resolution" value="2.50 A"/>
    <property type="chains" value="A/C/E/G/I/K/M/O=1-401"/>
</dbReference>
<dbReference type="PDBsum" id="4LW2"/>
<dbReference type="PDBsum" id="4LW4"/>
<dbReference type="PDBsum" id="5FT4"/>
<dbReference type="PDBsum" id="5FT5"/>
<dbReference type="PDBsum" id="5FT6"/>
<dbReference type="PDBsum" id="5FT8"/>
<dbReference type="SMR" id="Q46925"/>
<dbReference type="BioGRID" id="4261122">
    <property type="interactions" value="630"/>
</dbReference>
<dbReference type="BioGRID" id="851605">
    <property type="interactions" value="2"/>
</dbReference>
<dbReference type="ComplexPortal" id="CPX-2137">
    <property type="entry name" value="csdA L-cysteine desulfurase complex"/>
</dbReference>
<dbReference type="ComplexPortal" id="CPX-2138">
    <property type="entry name" value="cdsA-cdsE complex"/>
</dbReference>
<dbReference type="DIP" id="DIP-9323N"/>
<dbReference type="FunCoup" id="Q46925">
    <property type="interactions" value="184"/>
</dbReference>
<dbReference type="IntAct" id="Q46925">
    <property type="interactions" value="7"/>
</dbReference>
<dbReference type="STRING" id="511145.b2810"/>
<dbReference type="jPOST" id="Q46925"/>
<dbReference type="PaxDb" id="511145-b2810"/>
<dbReference type="EnsemblBacteria" id="AAC75852">
    <property type="protein sequence ID" value="AAC75852"/>
    <property type="gene ID" value="b2810"/>
</dbReference>
<dbReference type="GeneID" id="947275"/>
<dbReference type="KEGG" id="ecj:JW2781"/>
<dbReference type="KEGG" id="eco:b2810"/>
<dbReference type="KEGG" id="ecoc:C3026_15445"/>
<dbReference type="PATRIC" id="fig|1411691.4.peg.3923"/>
<dbReference type="EchoBASE" id="EB2891"/>
<dbReference type="eggNOG" id="COG0520">
    <property type="taxonomic scope" value="Bacteria"/>
</dbReference>
<dbReference type="HOGENOM" id="CLU_003433_2_5_6"/>
<dbReference type="InParanoid" id="Q46925"/>
<dbReference type="OMA" id="ANMLGWA"/>
<dbReference type="OrthoDB" id="9808002at2"/>
<dbReference type="PhylomeDB" id="Q46925"/>
<dbReference type="BioCyc" id="EcoCyc:G7454-MONOMER"/>
<dbReference type="BioCyc" id="MetaCyc:G7454-MONOMER"/>
<dbReference type="BRENDA" id="2.8.1.7">
    <property type="organism ID" value="2026"/>
</dbReference>
<dbReference type="EvolutionaryTrace" id="Q46925"/>
<dbReference type="PRO" id="PR:Q46925"/>
<dbReference type="Proteomes" id="UP000000625">
    <property type="component" value="Chromosome"/>
</dbReference>
<dbReference type="GO" id="GO:1990221">
    <property type="term" value="C:L-cysteine desulfurase complex"/>
    <property type="evidence" value="ECO:0000353"/>
    <property type="project" value="ComplexPortal"/>
</dbReference>
<dbReference type="GO" id="GO:0031071">
    <property type="term" value="F:cysteine desulfurase activity"/>
    <property type="evidence" value="ECO:0007669"/>
    <property type="project" value="UniProtKB-EC"/>
</dbReference>
<dbReference type="GO" id="GO:0008826">
    <property type="term" value="F:cysteine sulfinate desulfinase activity"/>
    <property type="evidence" value="ECO:0007669"/>
    <property type="project" value="RHEA"/>
</dbReference>
<dbReference type="GO" id="GO:0016787">
    <property type="term" value="F:hydrolase activity"/>
    <property type="evidence" value="ECO:0007669"/>
    <property type="project" value="UniProtKB-KW"/>
</dbReference>
<dbReference type="GO" id="GO:0030170">
    <property type="term" value="F:pyridoxal phosphate binding"/>
    <property type="evidence" value="ECO:0000314"/>
    <property type="project" value="EcoCyc"/>
</dbReference>
<dbReference type="GO" id="GO:0009000">
    <property type="term" value="F:selenocysteine lyase activity"/>
    <property type="evidence" value="ECO:0007669"/>
    <property type="project" value="UniProtKB-EC"/>
</dbReference>
<dbReference type="GO" id="GO:0016783">
    <property type="term" value="F:sulfurtransferase activity"/>
    <property type="evidence" value="ECO:0000314"/>
    <property type="project" value="EcoCyc"/>
</dbReference>
<dbReference type="GO" id="GO:0016226">
    <property type="term" value="P:iron-sulfur cluster assembly"/>
    <property type="evidence" value="ECO:0007669"/>
    <property type="project" value="InterPro"/>
</dbReference>
<dbReference type="GO" id="GO:0019448">
    <property type="term" value="P:L-cysteine catabolic process"/>
    <property type="evidence" value="ECO:0000314"/>
    <property type="project" value="ComplexPortal"/>
</dbReference>
<dbReference type="GO" id="GO:0016261">
    <property type="term" value="P:selenocysteine catabolic process"/>
    <property type="evidence" value="ECO:0000314"/>
    <property type="project" value="ComplexPortal"/>
</dbReference>
<dbReference type="GO" id="GO:0000096">
    <property type="term" value="P:sulfur amino acid metabolic process"/>
    <property type="evidence" value="ECO:0000314"/>
    <property type="project" value="EcoCyc"/>
</dbReference>
<dbReference type="GO" id="GO:0072348">
    <property type="term" value="P:sulfur compound transport"/>
    <property type="evidence" value="ECO:0000314"/>
    <property type="project" value="ComplexPortal"/>
</dbReference>
<dbReference type="CDD" id="cd06453">
    <property type="entry name" value="SufS_like"/>
    <property type="match status" value="1"/>
</dbReference>
<dbReference type="FunFam" id="3.40.640.10:FF:000081">
    <property type="entry name" value="Cysteine desulfurase CsdA"/>
    <property type="match status" value="1"/>
</dbReference>
<dbReference type="Gene3D" id="3.90.1150.10">
    <property type="entry name" value="Aspartate Aminotransferase, domain 1"/>
    <property type="match status" value="1"/>
</dbReference>
<dbReference type="Gene3D" id="3.40.640.10">
    <property type="entry name" value="Type I PLP-dependent aspartate aminotransferase-like (Major domain)"/>
    <property type="match status" value="1"/>
</dbReference>
<dbReference type="InterPro" id="IPR000192">
    <property type="entry name" value="Aminotrans_V_dom"/>
</dbReference>
<dbReference type="InterPro" id="IPR020578">
    <property type="entry name" value="Aminotrans_V_PyrdxlP_BS"/>
</dbReference>
<dbReference type="InterPro" id="IPR022471">
    <property type="entry name" value="Cys_desulphurase_CdsA"/>
</dbReference>
<dbReference type="InterPro" id="IPR010970">
    <property type="entry name" value="Cys_dSase_SufS"/>
</dbReference>
<dbReference type="InterPro" id="IPR015424">
    <property type="entry name" value="PyrdxlP-dep_Trfase"/>
</dbReference>
<dbReference type="InterPro" id="IPR015421">
    <property type="entry name" value="PyrdxlP-dep_Trfase_major"/>
</dbReference>
<dbReference type="InterPro" id="IPR015422">
    <property type="entry name" value="PyrdxlP-dep_Trfase_small"/>
</dbReference>
<dbReference type="NCBIfam" id="TIGR03392">
    <property type="entry name" value="FeS_syn_CsdA"/>
    <property type="match status" value="1"/>
</dbReference>
<dbReference type="NCBIfam" id="NF008126">
    <property type="entry name" value="PRK10874.1"/>
    <property type="match status" value="1"/>
</dbReference>
<dbReference type="PANTHER" id="PTHR43586">
    <property type="entry name" value="CYSTEINE DESULFURASE"/>
    <property type="match status" value="1"/>
</dbReference>
<dbReference type="PANTHER" id="PTHR43586:SF8">
    <property type="entry name" value="CYSTEINE DESULFURASE 1, CHLOROPLASTIC"/>
    <property type="match status" value="1"/>
</dbReference>
<dbReference type="Pfam" id="PF00266">
    <property type="entry name" value="Aminotran_5"/>
    <property type="match status" value="1"/>
</dbReference>
<dbReference type="SUPFAM" id="SSF53383">
    <property type="entry name" value="PLP-dependent transferases"/>
    <property type="match status" value="1"/>
</dbReference>
<dbReference type="PROSITE" id="PS00595">
    <property type="entry name" value="AA_TRANSFER_CLASS_5"/>
    <property type="match status" value="1"/>
</dbReference>
<protein>
    <recommendedName>
        <fullName evidence="9">Cysteine desulfurase CsdA</fullName>
        <ecNumber evidence="4 8">2.8.1.7</ecNumber>
    </recommendedName>
    <alternativeName>
        <fullName evidence="9">Cysteine sulfinate desulfinase</fullName>
        <shortName>CSD</shortName>
        <ecNumber evidence="8">3.13.1.-</ecNumber>
    </alternativeName>
    <alternativeName>
        <fullName evidence="9">Selenocysteine lyase</fullName>
        <ecNumber evidence="4 8">4.4.1.16</ecNumber>
    </alternativeName>
</protein>
<sequence>MNVFNPAQFRAQFPALQDAGVYLDSAATALKPEAVVEATQQFYSLSAGNVHRSQFAEAQRLTARYEAAREKVAQLLNAPDDKTIVWTRGTTESINMVAQCYARPRLQPGDEIIVSVAEHHANLVPWLMVAQQTGAKVVKLPLNAQRLPDVDLLPELITPRSRILALGQMSNVTGGCPDLARAITFAHSAGMVVMVDGAQGAVHFPADVQQLDIDFYAFSGHKLYGPTGIGVLYGKSELLEAMSPWLGGGKMVHEVSFDGFTTQSAPWKLEAGTPNVAGVIGLSAALEWLADYDINQAESWSRSLATLAEDALAKRPGFRSFRCQDSSLLAFDFAGVHHSDMVTLLAEYGIALRAGQHCAQPLLAELGVTGTLRASFAPYNTKSDVDALVNAVDRALELLVD</sequence>
<gene>
    <name type="primary">csdA</name>
    <name type="synonym">ygdJ</name>
    <name type="ordered locus">b2810</name>
    <name type="ordered locus">JW2781</name>
</gene>
<name>CSDA_ECOLI</name>
<feature type="chain" id="PRO_0000150291" description="Cysteine desulfurase CsdA">
    <location>
        <begin position="1"/>
        <end position="401"/>
    </location>
</feature>
<feature type="active site" description="Cysteine persulfide intermediate" evidence="11">
    <location>
        <position position="358"/>
    </location>
</feature>
<feature type="modified residue" description="N6-(pyridoxal phosphate)lysine" evidence="1">
    <location>
        <position position="222"/>
    </location>
</feature>
<feature type="mutagenesis site" description="No loss of activity." evidence="8">
    <original>C</original>
    <variation>A</variation>
    <location>
        <position position="100"/>
    </location>
</feature>
<feature type="mutagenesis site" description="No loss of activity." evidence="8">
    <original>C</original>
    <variation>A</variation>
    <location>
        <position position="176"/>
    </location>
</feature>
<feature type="mutagenesis site" description="No loss of activity." evidence="8">
    <original>C</original>
    <variation>A</variation>
    <location>
        <position position="323"/>
    </location>
</feature>
<feature type="mutagenesis site" description="Loss of cysteine desulfurization." evidence="2">
    <original>C</original>
    <variation>A</variation>
    <location>
        <position position="358"/>
    </location>
</feature>
<feature type="helix" evidence="12">
    <location>
        <begin position="6"/>
        <end position="10"/>
    </location>
</feature>
<feature type="helix" evidence="12">
    <location>
        <begin position="16"/>
        <end position="19"/>
    </location>
</feature>
<feature type="turn" evidence="12">
    <location>
        <begin position="25"/>
        <end position="27"/>
    </location>
</feature>
<feature type="helix" evidence="12">
    <location>
        <begin position="33"/>
        <end position="44"/>
    </location>
</feature>
<feature type="helix" evidence="12">
    <location>
        <begin position="55"/>
        <end position="75"/>
    </location>
</feature>
<feature type="helix" evidence="12">
    <location>
        <begin position="81"/>
        <end position="83"/>
    </location>
</feature>
<feature type="strand" evidence="12">
    <location>
        <begin position="84"/>
        <end position="89"/>
    </location>
</feature>
<feature type="helix" evidence="12">
    <location>
        <begin position="90"/>
        <end position="100"/>
    </location>
</feature>
<feature type="turn" evidence="12">
    <location>
        <begin position="101"/>
        <end position="105"/>
    </location>
</feature>
<feature type="strand" evidence="12">
    <location>
        <begin position="111"/>
        <end position="115"/>
    </location>
</feature>
<feature type="helix" evidence="12">
    <location>
        <begin position="120"/>
        <end position="122"/>
    </location>
</feature>
<feature type="helix" evidence="12">
    <location>
        <begin position="124"/>
        <end position="133"/>
    </location>
</feature>
<feature type="strand" evidence="12">
    <location>
        <begin position="136"/>
        <end position="140"/>
    </location>
</feature>
<feature type="strand" evidence="12">
    <location>
        <begin position="146"/>
        <end position="148"/>
    </location>
</feature>
<feature type="helix" evidence="12">
    <location>
        <begin position="150"/>
        <end position="152"/>
    </location>
</feature>
<feature type="helix" evidence="12">
    <location>
        <begin position="153"/>
        <end position="156"/>
    </location>
</feature>
<feature type="strand" evidence="12">
    <location>
        <begin position="161"/>
        <end position="169"/>
    </location>
</feature>
<feature type="turn" evidence="12">
    <location>
        <begin position="171"/>
        <end position="173"/>
    </location>
</feature>
<feature type="helix" evidence="12">
    <location>
        <begin position="179"/>
        <end position="188"/>
    </location>
</feature>
<feature type="strand" evidence="12">
    <location>
        <begin position="192"/>
        <end position="196"/>
    </location>
</feature>
<feature type="helix" evidence="12">
    <location>
        <begin position="200"/>
        <end position="203"/>
    </location>
</feature>
<feature type="turn" evidence="12">
    <location>
        <begin position="208"/>
        <end position="212"/>
    </location>
</feature>
<feature type="strand" evidence="12">
    <location>
        <begin position="214"/>
        <end position="219"/>
    </location>
</feature>
<feature type="helix" evidence="12">
    <location>
        <begin position="220"/>
        <end position="222"/>
    </location>
</feature>
<feature type="strand" evidence="12">
    <location>
        <begin position="230"/>
        <end position="234"/>
    </location>
</feature>
<feature type="helix" evidence="12">
    <location>
        <begin position="236"/>
        <end position="241"/>
    </location>
</feature>
<feature type="strand" evidence="12">
    <location>
        <begin position="248"/>
        <end position="256"/>
    </location>
</feature>
<feature type="strand" evidence="12">
    <location>
        <begin position="259"/>
        <end position="262"/>
    </location>
</feature>
<feature type="helix" evidence="12">
    <location>
        <begin position="267"/>
        <end position="269"/>
    </location>
</feature>
<feature type="helix" evidence="12">
    <location>
        <begin position="276"/>
        <end position="289"/>
    </location>
</feature>
<feature type="helix" evidence="12">
    <location>
        <begin position="294"/>
        <end position="312"/>
    </location>
</feature>
<feature type="strand" evidence="12">
    <location>
        <begin position="318"/>
        <end position="320"/>
    </location>
</feature>
<feature type="strand" evidence="12">
    <location>
        <begin position="327"/>
        <end position="333"/>
    </location>
</feature>
<feature type="helix" evidence="12">
    <location>
        <begin position="338"/>
        <end position="347"/>
    </location>
</feature>
<feature type="strand" evidence="13">
    <location>
        <begin position="353"/>
        <end position="355"/>
    </location>
</feature>
<feature type="helix" evidence="12">
    <location>
        <begin position="360"/>
        <end position="366"/>
    </location>
</feature>
<feature type="strand" evidence="12">
    <location>
        <begin position="372"/>
        <end position="375"/>
    </location>
</feature>
<feature type="helix" evidence="12">
    <location>
        <begin position="382"/>
        <end position="399"/>
    </location>
</feature>